<name>LCL2_PARBA</name>
<gene>
    <name type="primary">LCL2</name>
    <name type="ORF">PAAG_04200</name>
</gene>
<keyword id="KW-1185">Reference proteome</keyword>
<keyword id="KW-0732">Signal</keyword>
<reference key="1">
    <citation type="journal article" date="2011" name="PLoS Genet.">
        <title>Comparative genomic analysis of human fungal pathogens causing paracoccidioidomycosis.</title>
        <authorList>
            <person name="Desjardins C.A."/>
            <person name="Champion M.D."/>
            <person name="Holder J.W."/>
            <person name="Muszewska A."/>
            <person name="Goldberg J."/>
            <person name="Bailao A.M."/>
            <person name="Brigido M.M."/>
            <person name="Ferreira M.E."/>
            <person name="Garcia A.M."/>
            <person name="Grynberg M."/>
            <person name="Gujja S."/>
            <person name="Heiman D.I."/>
            <person name="Henn M.R."/>
            <person name="Kodira C.D."/>
            <person name="Leon-Narvaez H."/>
            <person name="Longo L.V.G."/>
            <person name="Ma L.-J."/>
            <person name="Malavazi I."/>
            <person name="Matsuo A.L."/>
            <person name="Morais F.V."/>
            <person name="Pereira M."/>
            <person name="Rodriguez-Brito S."/>
            <person name="Sakthikumar S."/>
            <person name="Salem-Izacc S.M."/>
            <person name="Sykes S.M."/>
            <person name="Teixeira M.M."/>
            <person name="Vallejo M.C."/>
            <person name="Walter M.E."/>
            <person name="Yandava C."/>
            <person name="Young S."/>
            <person name="Zeng Q."/>
            <person name="Zucker J."/>
            <person name="Felipe M.S."/>
            <person name="Goldman G.H."/>
            <person name="Haas B.J."/>
            <person name="McEwen J.G."/>
            <person name="Nino-Vega G."/>
            <person name="Puccia R."/>
            <person name="San-Blas G."/>
            <person name="Soares C.M."/>
            <person name="Birren B.W."/>
            <person name="Cuomo C.A."/>
        </authorList>
    </citation>
    <scope>NUCLEOTIDE SEQUENCE [LARGE SCALE GENOMIC DNA]</scope>
    <source>
        <strain>ATCC MYA-826 / Pb01</strain>
    </source>
</reference>
<sequence>MFHILIGALLGLLFLATGTRAQFQFFEQMFGGGGHQQQQDHREQNVASDSSWYQRNYDNAHCSDYLCPGTLACVSVPHHCPCQHPDVEDKFELGDGSAICISKGGFKANEAARKVELARKGLL</sequence>
<evidence type="ECO:0000250" key="1"/>
<evidence type="ECO:0000255" key="2"/>
<evidence type="ECO:0000305" key="3"/>
<dbReference type="EMBL" id="KN294001">
    <property type="protein sequence ID" value="EEH33147.2"/>
    <property type="status" value="ALT_INIT"/>
    <property type="molecule type" value="Genomic_DNA"/>
</dbReference>
<dbReference type="RefSeq" id="XP_002793928.2">
    <property type="nucleotide sequence ID" value="XM_002793882.2"/>
</dbReference>
<dbReference type="STRING" id="502779.C1H0A6"/>
<dbReference type="GeneID" id="9097010"/>
<dbReference type="KEGG" id="pbl:PAAG_04200"/>
<dbReference type="eggNOG" id="ENOG502S416">
    <property type="taxonomic scope" value="Eukaryota"/>
</dbReference>
<dbReference type="HOGENOM" id="CLU_142363_0_0_1"/>
<dbReference type="OrthoDB" id="2234316at2759"/>
<dbReference type="Proteomes" id="UP000002059">
    <property type="component" value="Partially assembled WGS sequence"/>
</dbReference>
<dbReference type="GO" id="GO:0036503">
    <property type="term" value="P:ERAD pathway"/>
    <property type="evidence" value="ECO:0007669"/>
    <property type="project" value="TreeGrafter"/>
</dbReference>
<dbReference type="CDD" id="cd23996">
    <property type="entry name" value="LCL2-like"/>
    <property type="match status" value="1"/>
</dbReference>
<dbReference type="InterPro" id="IPR034543">
    <property type="entry name" value="LCL2"/>
</dbReference>
<dbReference type="PANTHER" id="PTHR38425">
    <property type="entry name" value="LONG CHRONOLOGICAL LIFESPAN PROTEIN 2"/>
    <property type="match status" value="1"/>
</dbReference>
<dbReference type="PANTHER" id="PTHR38425:SF1">
    <property type="entry name" value="LONG CHRONOLOGICAL LIFESPAN PROTEIN 2"/>
    <property type="match status" value="1"/>
</dbReference>
<protein>
    <recommendedName>
        <fullName>Long chronological lifespan protein 2</fullName>
    </recommendedName>
</protein>
<proteinExistence type="inferred from homology"/>
<comment type="function">
    <text evidence="1">Probable component of the endoplasmic reticulum-associated degradation (ERAD) pathway.</text>
</comment>
<comment type="similarity">
    <text evidence="3">Belongs to the LCL2 family.</text>
</comment>
<comment type="sequence caution" evidence="3">
    <conflict type="erroneous initiation">
        <sequence resource="EMBL-CDS" id="EEH33147"/>
    </conflict>
    <text>Extended N-terminus.</text>
</comment>
<feature type="signal peptide" evidence="2">
    <location>
        <begin position="1"/>
        <end position="21"/>
    </location>
</feature>
<feature type="chain" id="PRO_0000408616" description="Long chronological lifespan protein 2">
    <location>
        <begin position="22"/>
        <end position="123"/>
    </location>
</feature>
<organism>
    <name type="scientific">Paracoccidioides lutzii (strain ATCC MYA-826 / Pb01)</name>
    <name type="common">Paracoccidioides brasiliensis</name>
    <dbReference type="NCBI Taxonomy" id="502779"/>
    <lineage>
        <taxon>Eukaryota</taxon>
        <taxon>Fungi</taxon>
        <taxon>Dikarya</taxon>
        <taxon>Ascomycota</taxon>
        <taxon>Pezizomycotina</taxon>
        <taxon>Eurotiomycetes</taxon>
        <taxon>Eurotiomycetidae</taxon>
        <taxon>Onygenales</taxon>
        <taxon>Ajellomycetaceae</taxon>
        <taxon>Paracoccidioides</taxon>
    </lineage>
</organism>
<accession>C1H0A6</accession>